<dbReference type="EC" id="2.1.1.190" evidence="1"/>
<dbReference type="EMBL" id="CP000647">
    <property type="protein sequence ID" value="ABR78528.1"/>
    <property type="molecule type" value="Genomic_DNA"/>
</dbReference>
<dbReference type="RefSeq" id="WP_004174638.1">
    <property type="nucleotide sequence ID" value="NC_009648.1"/>
</dbReference>
<dbReference type="SMR" id="A6TD57"/>
<dbReference type="STRING" id="272620.KPN_03127"/>
<dbReference type="PaxDb" id="272620-KPN_03127"/>
<dbReference type="EnsemblBacteria" id="ABR78528">
    <property type="protein sequence ID" value="ABR78528"/>
    <property type="gene ID" value="KPN_03127"/>
</dbReference>
<dbReference type="KEGG" id="kpn:KPN_03127"/>
<dbReference type="HOGENOM" id="CLU_014689_8_2_6"/>
<dbReference type="Proteomes" id="UP000000265">
    <property type="component" value="Chromosome"/>
</dbReference>
<dbReference type="GO" id="GO:0051539">
    <property type="term" value="F:4 iron, 4 sulfur cluster binding"/>
    <property type="evidence" value="ECO:0007669"/>
    <property type="project" value="UniProtKB-KW"/>
</dbReference>
<dbReference type="GO" id="GO:0005506">
    <property type="term" value="F:iron ion binding"/>
    <property type="evidence" value="ECO:0007669"/>
    <property type="project" value="UniProtKB-UniRule"/>
</dbReference>
<dbReference type="GO" id="GO:0003723">
    <property type="term" value="F:RNA binding"/>
    <property type="evidence" value="ECO:0007669"/>
    <property type="project" value="InterPro"/>
</dbReference>
<dbReference type="GO" id="GO:0070041">
    <property type="term" value="F:rRNA (uridine-C5-)-methyltransferase activity"/>
    <property type="evidence" value="ECO:0007669"/>
    <property type="project" value="UniProtKB-UniRule"/>
</dbReference>
<dbReference type="GO" id="GO:0070475">
    <property type="term" value="P:rRNA base methylation"/>
    <property type="evidence" value="ECO:0007669"/>
    <property type="project" value="TreeGrafter"/>
</dbReference>
<dbReference type="CDD" id="cd02440">
    <property type="entry name" value="AdoMet_MTases"/>
    <property type="match status" value="1"/>
</dbReference>
<dbReference type="FunFam" id="3.40.50.150:FF:000009">
    <property type="entry name" value="23S rRNA (Uracil(1939)-C(5))-methyltransferase RlmD"/>
    <property type="match status" value="1"/>
</dbReference>
<dbReference type="FunFam" id="2.40.50.1070:FF:000004">
    <property type="entry name" value="23S rRNA (uracil(1939)-C(5))-methyltransferase RlmD"/>
    <property type="match status" value="1"/>
</dbReference>
<dbReference type="FunFam" id="2.40.50.140:FF:000097">
    <property type="entry name" value="23S rRNA (uracil(1939)-C(5))-methyltransferase RlmD"/>
    <property type="match status" value="1"/>
</dbReference>
<dbReference type="Gene3D" id="2.40.50.1070">
    <property type="match status" value="1"/>
</dbReference>
<dbReference type="Gene3D" id="2.40.50.140">
    <property type="entry name" value="Nucleic acid-binding proteins"/>
    <property type="match status" value="1"/>
</dbReference>
<dbReference type="Gene3D" id="3.40.50.150">
    <property type="entry name" value="Vaccinia Virus protein VP39"/>
    <property type="match status" value="1"/>
</dbReference>
<dbReference type="HAMAP" id="MF_01010">
    <property type="entry name" value="23SrRNA_methyltr_RlmD"/>
    <property type="match status" value="1"/>
</dbReference>
<dbReference type="InterPro" id="IPR001566">
    <property type="entry name" value="23S_rRNA_MeTrfase_RlmD"/>
</dbReference>
<dbReference type="InterPro" id="IPR030390">
    <property type="entry name" value="MeTrfase_TrmA_AS"/>
</dbReference>
<dbReference type="InterPro" id="IPR030391">
    <property type="entry name" value="MeTrfase_TrmA_CS"/>
</dbReference>
<dbReference type="InterPro" id="IPR012340">
    <property type="entry name" value="NA-bd_OB-fold"/>
</dbReference>
<dbReference type="InterPro" id="IPR029063">
    <property type="entry name" value="SAM-dependent_MTases_sf"/>
</dbReference>
<dbReference type="InterPro" id="IPR002792">
    <property type="entry name" value="TRAM_dom"/>
</dbReference>
<dbReference type="InterPro" id="IPR010280">
    <property type="entry name" value="U5_MeTrfase_fam"/>
</dbReference>
<dbReference type="NCBIfam" id="NF009639">
    <property type="entry name" value="PRK13168.1"/>
    <property type="match status" value="1"/>
</dbReference>
<dbReference type="NCBIfam" id="TIGR00479">
    <property type="entry name" value="rumA"/>
    <property type="match status" value="1"/>
</dbReference>
<dbReference type="PANTHER" id="PTHR11061:SF49">
    <property type="entry name" value="23S RRNA (URACIL(1939)-C(5))-METHYLTRANSFERASE RLMD"/>
    <property type="match status" value="1"/>
</dbReference>
<dbReference type="PANTHER" id="PTHR11061">
    <property type="entry name" value="RNA M5U METHYLTRANSFERASE"/>
    <property type="match status" value="1"/>
</dbReference>
<dbReference type="Pfam" id="PF01938">
    <property type="entry name" value="TRAM"/>
    <property type="match status" value="1"/>
</dbReference>
<dbReference type="Pfam" id="PF05958">
    <property type="entry name" value="tRNA_U5-meth_tr"/>
    <property type="match status" value="1"/>
</dbReference>
<dbReference type="SUPFAM" id="SSF50249">
    <property type="entry name" value="Nucleic acid-binding proteins"/>
    <property type="match status" value="1"/>
</dbReference>
<dbReference type="SUPFAM" id="SSF53335">
    <property type="entry name" value="S-adenosyl-L-methionine-dependent methyltransferases"/>
    <property type="match status" value="1"/>
</dbReference>
<dbReference type="PROSITE" id="PS51687">
    <property type="entry name" value="SAM_MT_RNA_M5U"/>
    <property type="match status" value="1"/>
</dbReference>
<dbReference type="PROSITE" id="PS50926">
    <property type="entry name" value="TRAM"/>
    <property type="match status" value="1"/>
</dbReference>
<dbReference type="PROSITE" id="PS01230">
    <property type="entry name" value="TRMA_1"/>
    <property type="match status" value="1"/>
</dbReference>
<dbReference type="PROSITE" id="PS01231">
    <property type="entry name" value="TRMA_2"/>
    <property type="match status" value="1"/>
</dbReference>
<proteinExistence type="inferred from homology"/>
<gene>
    <name evidence="1" type="primary">rlmD</name>
    <name type="synonym">rumA</name>
    <name type="ordered locus">KPN78578_30670</name>
    <name type="ORF">KPN_03127</name>
</gene>
<sequence>MAQFYSAKRRVTTRQIITVTVNDLDPFGQGVARHQGKALFVSGVLPHEQAEVVLVEDKKQYARAEVKRRLTDSPQRQAPRCPHFGVCGGCQQQHASVPLQQQSKRAALGRLMKREVDDVIAGAPWGYRRRARLSLNYQPKTQQLQMGFRQANAKAIVDVVQCPVLVPQLEALLPAVRECLSALSALRHLGHVELVQADNGPLMVLRHTAALPATDREKLERFSQTHGLSLYLAPQSEILEHIHGEAPWYTSDGLRLVFSPRDFIQVNDGVNQQMVRTALEWLDLRPEDRVLDLFCGMGNFTLPLATRAAHVVGVEGVPALVEKGRENAARNGLSNVTFFHENLEEDVTRQAWAKHGFDKVLLDPARAGAPGVMPHIIKLAPRRVVYVSCNPATLARDSETLLQAGYQIQRLAMLDMFPHTGHLESMVLFERRLT</sequence>
<reference key="1">
    <citation type="submission" date="2006-09" db="EMBL/GenBank/DDBJ databases">
        <authorList>
            <consortium name="The Klebsiella pneumonia Genome Sequencing Project"/>
            <person name="McClelland M."/>
            <person name="Sanderson E.K."/>
            <person name="Spieth J."/>
            <person name="Clifton W.S."/>
            <person name="Latreille P."/>
            <person name="Sabo A."/>
            <person name="Pepin K."/>
            <person name="Bhonagiri V."/>
            <person name="Porwollik S."/>
            <person name="Ali J."/>
            <person name="Wilson R.K."/>
        </authorList>
    </citation>
    <scope>NUCLEOTIDE SEQUENCE [LARGE SCALE GENOMIC DNA]</scope>
    <source>
        <strain>ATCC 700721 / MGH 78578</strain>
    </source>
</reference>
<evidence type="ECO:0000255" key="1">
    <source>
        <dbReference type="HAMAP-Rule" id="MF_01010"/>
    </source>
</evidence>
<comment type="function">
    <text evidence="1">Catalyzes the formation of 5-methyl-uridine at position 1939 (m5U1939) in 23S rRNA.</text>
</comment>
<comment type="catalytic activity">
    <reaction evidence="1">
        <text>uridine(1939) in 23S rRNA + S-adenosyl-L-methionine = 5-methyluridine(1939) in 23S rRNA + S-adenosyl-L-homocysteine + H(+)</text>
        <dbReference type="Rhea" id="RHEA:42908"/>
        <dbReference type="Rhea" id="RHEA-COMP:10278"/>
        <dbReference type="Rhea" id="RHEA-COMP:10279"/>
        <dbReference type="ChEBI" id="CHEBI:15378"/>
        <dbReference type="ChEBI" id="CHEBI:57856"/>
        <dbReference type="ChEBI" id="CHEBI:59789"/>
        <dbReference type="ChEBI" id="CHEBI:65315"/>
        <dbReference type="ChEBI" id="CHEBI:74447"/>
        <dbReference type="EC" id="2.1.1.190"/>
    </reaction>
</comment>
<comment type="similarity">
    <text evidence="1">Belongs to the class I-like SAM-binding methyltransferase superfamily. RNA M5U methyltransferase family. RlmD subfamily.</text>
</comment>
<name>RLMD_KLEP7</name>
<protein>
    <recommendedName>
        <fullName evidence="1">23S rRNA (uracil(1939)-C(5))-methyltransferase RlmD</fullName>
        <ecNumber evidence="1">2.1.1.190</ecNumber>
    </recommendedName>
    <alternativeName>
        <fullName evidence="1">23S rRNA(m5U1939)-methyltransferase</fullName>
    </alternativeName>
</protein>
<keyword id="KW-0004">4Fe-4S</keyword>
<keyword id="KW-0408">Iron</keyword>
<keyword id="KW-0411">Iron-sulfur</keyword>
<keyword id="KW-0479">Metal-binding</keyword>
<keyword id="KW-0489">Methyltransferase</keyword>
<keyword id="KW-0698">rRNA processing</keyword>
<keyword id="KW-0949">S-adenosyl-L-methionine</keyword>
<keyword id="KW-0808">Transferase</keyword>
<organism>
    <name type="scientific">Klebsiella pneumoniae subsp. pneumoniae (strain ATCC 700721 / MGH 78578)</name>
    <dbReference type="NCBI Taxonomy" id="272620"/>
    <lineage>
        <taxon>Bacteria</taxon>
        <taxon>Pseudomonadati</taxon>
        <taxon>Pseudomonadota</taxon>
        <taxon>Gammaproteobacteria</taxon>
        <taxon>Enterobacterales</taxon>
        <taxon>Enterobacteriaceae</taxon>
        <taxon>Klebsiella/Raoultella group</taxon>
        <taxon>Klebsiella</taxon>
        <taxon>Klebsiella pneumoniae complex</taxon>
    </lineage>
</organism>
<feature type="chain" id="PRO_1000200845" description="23S rRNA (uracil(1939)-C(5))-methyltransferase RlmD">
    <location>
        <begin position="1"/>
        <end position="434"/>
    </location>
</feature>
<feature type="domain" description="TRAM" evidence="1">
    <location>
        <begin position="10"/>
        <end position="68"/>
    </location>
</feature>
<feature type="active site" description="Nucleophile" evidence="1">
    <location>
        <position position="389"/>
    </location>
</feature>
<feature type="binding site" evidence="1">
    <location>
        <position position="81"/>
    </location>
    <ligand>
        <name>[4Fe-4S] cluster</name>
        <dbReference type="ChEBI" id="CHEBI:49883"/>
    </ligand>
</feature>
<feature type="binding site" evidence="1">
    <location>
        <position position="87"/>
    </location>
    <ligand>
        <name>[4Fe-4S] cluster</name>
        <dbReference type="ChEBI" id="CHEBI:49883"/>
    </ligand>
</feature>
<feature type="binding site" evidence="1">
    <location>
        <position position="90"/>
    </location>
    <ligand>
        <name>[4Fe-4S] cluster</name>
        <dbReference type="ChEBI" id="CHEBI:49883"/>
    </ligand>
</feature>
<feature type="binding site" evidence="1">
    <location>
        <position position="162"/>
    </location>
    <ligand>
        <name>[4Fe-4S] cluster</name>
        <dbReference type="ChEBI" id="CHEBI:49883"/>
    </ligand>
</feature>
<feature type="binding site" evidence="1">
    <location>
        <position position="265"/>
    </location>
    <ligand>
        <name>S-adenosyl-L-methionine</name>
        <dbReference type="ChEBI" id="CHEBI:59789"/>
    </ligand>
</feature>
<feature type="binding site" evidence="1">
    <location>
        <position position="294"/>
    </location>
    <ligand>
        <name>S-adenosyl-L-methionine</name>
        <dbReference type="ChEBI" id="CHEBI:59789"/>
    </ligand>
</feature>
<feature type="binding site" evidence="1">
    <location>
        <position position="299"/>
    </location>
    <ligand>
        <name>S-adenosyl-L-methionine</name>
        <dbReference type="ChEBI" id="CHEBI:59789"/>
    </ligand>
</feature>
<feature type="binding site" evidence="1">
    <location>
        <position position="315"/>
    </location>
    <ligand>
        <name>S-adenosyl-L-methionine</name>
        <dbReference type="ChEBI" id="CHEBI:59789"/>
    </ligand>
</feature>
<feature type="binding site" evidence="1">
    <location>
        <position position="342"/>
    </location>
    <ligand>
        <name>S-adenosyl-L-methionine</name>
        <dbReference type="ChEBI" id="CHEBI:59789"/>
    </ligand>
</feature>
<feature type="binding site" evidence="1">
    <location>
        <position position="363"/>
    </location>
    <ligand>
        <name>S-adenosyl-L-methionine</name>
        <dbReference type="ChEBI" id="CHEBI:59789"/>
    </ligand>
</feature>
<accession>A6TD57</accession>